<reference key="1">
    <citation type="journal article" date="1998" name="Biochem. Biophys. Res. Commun.">
        <title>Identification and characterization of a new human gene encoding a small protein with high homology to the proline-rich region of the SH3BGR gene.</title>
        <authorList>
            <person name="Egeo A."/>
            <person name="Mazzocco M."/>
            <person name="Arrigo P."/>
            <person name="Vidal-Taboada J.M."/>
            <person name="Oliva R."/>
            <person name="Pirola B."/>
            <person name="Giglio S."/>
            <person name="Rasore-Quartino A."/>
            <person name="Scartezzini P."/>
        </authorList>
    </citation>
    <scope>NUCLEOTIDE SEQUENCE [MRNA]</scope>
    <scope>TISSUE SPECIFICITY</scope>
    <source>
        <tissue>Brain</tissue>
    </source>
</reference>
<reference key="2">
    <citation type="journal article" date="2001" name="Genome Res.">
        <title>Towards a catalog of human genes and proteins: sequencing and analysis of 500 novel complete protein coding human cDNAs.</title>
        <authorList>
            <person name="Wiemann S."/>
            <person name="Weil B."/>
            <person name="Wellenreuther R."/>
            <person name="Gassenhuber J."/>
            <person name="Glassl S."/>
            <person name="Ansorge W."/>
            <person name="Boecher M."/>
            <person name="Bloecker H."/>
            <person name="Bauersachs S."/>
            <person name="Blum H."/>
            <person name="Lauber J."/>
            <person name="Duesterhoeft A."/>
            <person name="Beyer A."/>
            <person name="Koehrer K."/>
            <person name="Strack N."/>
            <person name="Mewes H.-W."/>
            <person name="Ottenwaelder B."/>
            <person name="Obermaier B."/>
            <person name="Tampe J."/>
            <person name="Heubner D."/>
            <person name="Wambutt R."/>
            <person name="Korn B."/>
            <person name="Klein M."/>
            <person name="Poustka A."/>
        </authorList>
    </citation>
    <scope>NUCLEOTIDE SEQUENCE [LARGE SCALE MRNA]</scope>
    <source>
        <tissue>Kidney</tissue>
    </source>
</reference>
<reference key="3">
    <citation type="submission" date="2004-06" db="EMBL/GenBank/DDBJ databases">
        <title>Cloning of human full open reading frames in Gateway(TM) system entry vector (pDONR201).</title>
        <authorList>
            <person name="Ebert L."/>
            <person name="Schick M."/>
            <person name="Neubert P."/>
            <person name="Schatten R."/>
            <person name="Henze S."/>
            <person name="Korn B."/>
        </authorList>
    </citation>
    <scope>NUCLEOTIDE SEQUENCE [LARGE SCALE MRNA]</scope>
</reference>
<reference key="4">
    <citation type="journal article" date="2005" name="Nature">
        <title>The DNA sequence of the human X chromosome.</title>
        <authorList>
            <person name="Ross M.T."/>
            <person name="Grafham D.V."/>
            <person name="Coffey A.J."/>
            <person name="Scherer S."/>
            <person name="McLay K."/>
            <person name="Muzny D."/>
            <person name="Platzer M."/>
            <person name="Howell G.R."/>
            <person name="Burrows C."/>
            <person name="Bird C.P."/>
            <person name="Frankish A."/>
            <person name="Lovell F.L."/>
            <person name="Howe K.L."/>
            <person name="Ashurst J.L."/>
            <person name="Fulton R.S."/>
            <person name="Sudbrak R."/>
            <person name="Wen G."/>
            <person name="Jones M.C."/>
            <person name="Hurles M.E."/>
            <person name="Andrews T.D."/>
            <person name="Scott C.E."/>
            <person name="Searle S."/>
            <person name="Ramser J."/>
            <person name="Whittaker A."/>
            <person name="Deadman R."/>
            <person name="Carter N.P."/>
            <person name="Hunt S.E."/>
            <person name="Chen R."/>
            <person name="Cree A."/>
            <person name="Gunaratne P."/>
            <person name="Havlak P."/>
            <person name="Hodgson A."/>
            <person name="Metzker M.L."/>
            <person name="Richards S."/>
            <person name="Scott G."/>
            <person name="Steffen D."/>
            <person name="Sodergren E."/>
            <person name="Wheeler D.A."/>
            <person name="Worley K.C."/>
            <person name="Ainscough R."/>
            <person name="Ambrose K.D."/>
            <person name="Ansari-Lari M.A."/>
            <person name="Aradhya S."/>
            <person name="Ashwell R.I."/>
            <person name="Babbage A.K."/>
            <person name="Bagguley C.L."/>
            <person name="Ballabio A."/>
            <person name="Banerjee R."/>
            <person name="Barker G.E."/>
            <person name="Barlow K.F."/>
            <person name="Barrett I.P."/>
            <person name="Bates K.N."/>
            <person name="Beare D.M."/>
            <person name="Beasley H."/>
            <person name="Beasley O."/>
            <person name="Beck A."/>
            <person name="Bethel G."/>
            <person name="Blechschmidt K."/>
            <person name="Brady N."/>
            <person name="Bray-Allen S."/>
            <person name="Bridgeman A.M."/>
            <person name="Brown A.J."/>
            <person name="Brown M.J."/>
            <person name="Bonnin D."/>
            <person name="Bruford E.A."/>
            <person name="Buhay C."/>
            <person name="Burch P."/>
            <person name="Burford D."/>
            <person name="Burgess J."/>
            <person name="Burrill W."/>
            <person name="Burton J."/>
            <person name="Bye J.M."/>
            <person name="Carder C."/>
            <person name="Carrel L."/>
            <person name="Chako J."/>
            <person name="Chapman J.C."/>
            <person name="Chavez D."/>
            <person name="Chen E."/>
            <person name="Chen G."/>
            <person name="Chen Y."/>
            <person name="Chen Z."/>
            <person name="Chinault C."/>
            <person name="Ciccodicola A."/>
            <person name="Clark S.Y."/>
            <person name="Clarke G."/>
            <person name="Clee C.M."/>
            <person name="Clegg S."/>
            <person name="Clerc-Blankenburg K."/>
            <person name="Clifford K."/>
            <person name="Cobley V."/>
            <person name="Cole C.G."/>
            <person name="Conquer J.S."/>
            <person name="Corby N."/>
            <person name="Connor R.E."/>
            <person name="David R."/>
            <person name="Davies J."/>
            <person name="Davis C."/>
            <person name="Davis J."/>
            <person name="Delgado O."/>
            <person name="Deshazo D."/>
            <person name="Dhami P."/>
            <person name="Ding Y."/>
            <person name="Dinh H."/>
            <person name="Dodsworth S."/>
            <person name="Draper H."/>
            <person name="Dugan-Rocha S."/>
            <person name="Dunham A."/>
            <person name="Dunn M."/>
            <person name="Durbin K.J."/>
            <person name="Dutta I."/>
            <person name="Eades T."/>
            <person name="Ellwood M."/>
            <person name="Emery-Cohen A."/>
            <person name="Errington H."/>
            <person name="Evans K.L."/>
            <person name="Faulkner L."/>
            <person name="Francis F."/>
            <person name="Frankland J."/>
            <person name="Fraser A.E."/>
            <person name="Galgoczy P."/>
            <person name="Gilbert J."/>
            <person name="Gill R."/>
            <person name="Gloeckner G."/>
            <person name="Gregory S.G."/>
            <person name="Gribble S."/>
            <person name="Griffiths C."/>
            <person name="Grocock R."/>
            <person name="Gu Y."/>
            <person name="Gwilliam R."/>
            <person name="Hamilton C."/>
            <person name="Hart E.A."/>
            <person name="Hawes A."/>
            <person name="Heath P.D."/>
            <person name="Heitmann K."/>
            <person name="Hennig S."/>
            <person name="Hernandez J."/>
            <person name="Hinzmann B."/>
            <person name="Ho S."/>
            <person name="Hoffs M."/>
            <person name="Howden P.J."/>
            <person name="Huckle E.J."/>
            <person name="Hume J."/>
            <person name="Hunt P.J."/>
            <person name="Hunt A.R."/>
            <person name="Isherwood J."/>
            <person name="Jacob L."/>
            <person name="Johnson D."/>
            <person name="Jones S."/>
            <person name="de Jong P.J."/>
            <person name="Joseph S.S."/>
            <person name="Keenan S."/>
            <person name="Kelly S."/>
            <person name="Kershaw J.K."/>
            <person name="Khan Z."/>
            <person name="Kioschis P."/>
            <person name="Klages S."/>
            <person name="Knights A.J."/>
            <person name="Kosiura A."/>
            <person name="Kovar-Smith C."/>
            <person name="Laird G.K."/>
            <person name="Langford C."/>
            <person name="Lawlor S."/>
            <person name="Leversha M."/>
            <person name="Lewis L."/>
            <person name="Liu W."/>
            <person name="Lloyd C."/>
            <person name="Lloyd D.M."/>
            <person name="Loulseged H."/>
            <person name="Loveland J.E."/>
            <person name="Lovell J.D."/>
            <person name="Lozado R."/>
            <person name="Lu J."/>
            <person name="Lyne R."/>
            <person name="Ma J."/>
            <person name="Maheshwari M."/>
            <person name="Matthews L.H."/>
            <person name="McDowall J."/>
            <person name="McLaren S."/>
            <person name="McMurray A."/>
            <person name="Meidl P."/>
            <person name="Meitinger T."/>
            <person name="Milne S."/>
            <person name="Miner G."/>
            <person name="Mistry S.L."/>
            <person name="Morgan M."/>
            <person name="Morris S."/>
            <person name="Mueller I."/>
            <person name="Mullikin J.C."/>
            <person name="Nguyen N."/>
            <person name="Nordsiek G."/>
            <person name="Nyakatura G."/>
            <person name="O'dell C.N."/>
            <person name="Okwuonu G."/>
            <person name="Palmer S."/>
            <person name="Pandian R."/>
            <person name="Parker D."/>
            <person name="Parrish J."/>
            <person name="Pasternak S."/>
            <person name="Patel D."/>
            <person name="Pearce A.V."/>
            <person name="Pearson D.M."/>
            <person name="Pelan S.E."/>
            <person name="Perez L."/>
            <person name="Porter K.M."/>
            <person name="Ramsey Y."/>
            <person name="Reichwald K."/>
            <person name="Rhodes S."/>
            <person name="Ridler K.A."/>
            <person name="Schlessinger D."/>
            <person name="Schueler M.G."/>
            <person name="Sehra H.K."/>
            <person name="Shaw-Smith C."/>
            <person name="Shen H."/>
            <person name="Sheridan E.M."/>
            <person name="Shownkeen R."/>
            <person name="Skuce C.D."/>
            <person name="Smith M.L."/>
            <person name="Sotheran E.C."/>
            <person name="Steingruber H.E."/>
            <person name="Steward C.A."/>
            <person name="Storey R."/>
            <person name="Swann R.M."/>
            <person name="Swarbreck D."/>
            <person name="Tabor P.E."/>
            <person name="Taudien S."/>
            <person name="Taylor T."/>
            <person name="Teague B."/>
            <person name="Thomas K."/>
            <person name="Thorpe A."/>
            <person name="Timms K."/>
            <person name="Tracey A."/>
            <person name="Trevanion S."/>
            <person name="Tromans A.C."/>
            <person name="d'Urso M."/>
            <person name="Verduzco D."/>
            <person name="Villasana D."/>
            <person name="Waldron L."/>
            <person name="Wall M."/>
            <person name="Wang Q."/>
            <person name="Warren J."/>
            <person name="Warry G.L."/>
            <person name="Wei X."/>
            <person name="West A."/>
            <person name="Whitehead S.L."/>
            <person name="Whiteley M.N."/>
            <person name="Wilkinson J.E."/>
            <person name="Willey D.L."/>
            <person name="Williams G."/>
            <person name="Williams L."/>
            <person name="Williamson A."/>
            <person name="Williamson H."/>
            <person name="Wilming L."/>
            <person name="Woodmansey R.L."/>
            <person name="Wray P.W."/>
            <person name="Yen J."/>
            <person name="Zhang J."/>
            <person name="Zhou J."/>
            <person name="Zoghbi H."/>
            <person name="Zorilla S."/>
            <person name="Buck D."/>
            <person name="Reinhardt R."/>
            <person name="Poustka A."/>
            <person name="Rosenthal A."/>
            <person name="Lehrach H."/>
            <person name="Meindl A."/>
            <person name="Minx P.J."/>
            <person name="Hillier L.W."/>
            <person name="Willard H.F."/>
            <person name="Wilson R.K."/>
            <person name="Waterston R.H."/>
            <person name="Rice C.M."/>
            <person name="Vaudin M."/>
            <person name="Coulson A."/>
            <person name="Nelson D.L."/>
            <person name="Weinstock G."/>
            <person name="Sulston J.E."/>
            <person name="Durbin R.M."/>
            <person name="Hubbard T."/>
            <person name="Gibbs R.A."/>
            <person name="Beck S."/>
            <person name="Rogers J."/>
            <person name="Bentley D.R."/>
        </authorList>
    </citation>
    <scope>NUCLEOTIDE SEQUENCE [LARGE SCALE GENOMIC DNA]</scope>
</reference>
<reference key="5">
    <citation type="journal article" date="2004" name="Genome Res.">
        <title>The status, quality, and expansion of the NIH full-length cDNA project: the Mammalian Gene Collection (MGC).</title>
        <authorList>
            <consortium name="The MGC Project Team"/>
        </authorList>
    </citation>
    <scope>NUCLEOTIDE SEQUENCE [LARGE SCALE MRNA]</scope>
    <source>
        <tissue>Bone marrow</tissue>
        <tissue>PNS</tissue>
    </source>
</reference>
<reference key="6">
    <citation type="journal article" date="2011" name="BMC Syst. Biol.">
        <title>Initial characterization of the human central proteome.</title>
        <authorList>
            <person name="Burkard T.R."/>
            <person name="Planyavsky M."/>
            <person name="Kaupe I."/>
            <person name="Breitwieser F.P."/>
            <person name="Buerckstuemmer T."/>
            <person name="Bennett K.L."/>
            <person name="Superti-Furga G."/>
            <person name="Colinge J."/>
        </authorList>
    </citation>
    <scope>IDENTIFICATION BY MASS SPECTROMETRY [LARGE SCALE ANALYSIS]</scope>
</reference>
<reference key="7">
    <citation type="journal article" date="2005" name="Acta Crystallogr. F">
        <title>Expression, purification and crystallization of a human protein SH3BGRL at atomic resolution.</title>
        <authorList>
            <person name="Yin L."/>
            <person name="Zhu D.Y."/>
            <person name="Yang N."/>
            <person name="Huang Q.H."/>
            <person name="Zhang Y."/>
            <person name="Wang D.C."/>
        </authorList>
    </citation>
    <scope>SUBUNIT</scope>
</reference>
<reference key="8">
    <citation type="journal article" date="2020" name="J. Exp. Clin. Cancer Res.">
        <title>SH3BGRL confers innate drug resistance in breast cancer by stabilizing HER2 activation on cell membrane.</title>
        <authorList>
            <person name="Li H."/>
            <person name="Zhang M."/>
            <person name="Wei Y."/>
            <person name="Haider F."/>
            <person name="Lin Y."/>
            <person name="Guan W."/>
            <person name="Liu Y."/>
            <person name="Zhang S."/>
            <person name="Yuan R."/>
            <person name="Yang X."/>
            <person name="Yang S."/>
            <person name="Wang H."/>
        </authorList>
    </citation>
    <scope>INTERACTION WITH ERBB2</scope>
    <scope>SUBCELLULAR LOCATION</scope>
    <scope>INVOLVEMENT IN BREAST CANCER</scope>
</reference>
<reference key="9">
    <citation type="journal article" date="2021" name="Autophagy">
        <title>Adaptor SH3BGRL drives autophagy-mediated chemoresistance through promoting PIK3C3 translation and ATG12 stability in breast cancers.</title>
        <authorList>
            <person name="Zhang S."/>
            <person name="Liu X."/>
            <person name="Abdulmomen Ali Mohammed S."/>
            <person name="Li H."/>
            <person name="Cai W."/>
            <person name="Guan W."/>
            <person name="Liu D."/>
            <person name="Wei Y."/>
            <person name="Rong D."/>
            <person name="Fang Y."/>
            <person name="Haider F."/>
            <person name="Lv H."/>
            <person name="Jin Z."/>
            <person name="Chen X."/>
            <person name="Mo Z."/>
            <person name="Li L."/>
            <person name="Yang S."/>
            <person name="Wang H."/>
        </authorList>
    </citation>
    <scope>FUNCTION</scope>
    <scope>INTERACTION WITH ATG12; BECN1 AND RIBOSOMES</scope>
    <scope>SUBCELLULAR LOCATION</scope>
    <scope>INVOLVEMENT IN BREAST CANCER</scope>
</reference>
<reference key="10">
    <citation type="journal article" date="2021" name="Oncogene">
        <title>Adaptor SH3BGRL promotes breast cancer metastasis through PFN1 degradation by translational STUB1 upregulation.</title>
        <authorList>
            <person name="Zhang S."/>
            <person name="Guo X."/>
            <person name="Liu X."/>
            <person name="Zhong Z."/>
            <person name="Yang S."/>
            <person name="Wang H."/>
        </authorList>
    </citation>
    <scope>FUNCTION</scope>
    <scope>INTERACTION WITH PFN1 AND RIBOSOMES</scope>
    <scope>SUBCELLULAR LOCATION</scope>
    <scope>INVOLVEMENT IN BREAST CANCER</scope>
</reference>
<reference key="11">
    <citation type="journal article" date="2022" name="Oncogene">
        <title>Correction to: Adaptor SH3BGRL promotes breast cancer metastasis through PFN1 degradation by translational STUB1 upregulation.</title>
        <authorList>
            <person name="Zhang S."/>
            <person name="Guo X."/>
            <person name="Liu X."/>
            <person name="Zhong Z."/>
            <person name="Yang S."/>
            <person name="Wang H."/>
        </authorList>
    </citation>
    <scope>ERRATUM OF PUBMED:34331014</scope>
</reference>
<reference evidence="13" key="12">
    <citation type="submission" date="2004-10" db="PDB data bank">
        <title>Solution structure of the SH3 domain-binding glutamic acid-rich-like protein.</title>
        <authorList>
            <person name="Inoue K."/>
            <person name="Miyamoto K."/>
            <person name="Nagashima T."/>
            <person name="Hayashi F."/>
            <person name="Kigawa T."/>
            <person name="Yokoyama S."/>
        </authorList>
    </citation>
    <scope>STRUCTURE BY NMR OF 1-108</scope>
</reference>
<reference evidence="12" key="13">
    <citation type="journal article" date="2005" name="Proteins">
        <title>Crystal structure of human SH3BGRL protein: the first structure of the human SH3BGR family representing a novel class of thioredoxin fold proteins.</title>
        <authorList>
            <person name="Yin L."/>
            <person name="Xiang Y."/>
            <person name="Zhu D.Y."/>
            <person name="Yan N."/>
            <person name="Huang R.H."/>
            <person name="Zhang Y."/>
            <person name="Wang D.C."/>
        </authorList>
    </citation>
    <scope>X-RAY CRYSTALLOGRAPHY (1.9 ANGSTROMS) OF 2-114</scope>
    <scope>DOMAIN</scope>
</reference>
<evidence type="ECO:0000255" key="1"/>
<evidence type="ECO:0000269" key="2">
    <source>
    </source>
</evidence>
<evidence type="ECO:0000269" key="3">
    <source>
    </source>
</evidence>
<evidence type="ECO:0000269" key="4">
    <source>
    </source>
</evidence>
<evidence type="ECO:0000269" key="5">
    <source>
    </source>
</evidence>
<evidence type="ECO:0000269" key="6">
    <source>
    </source>
</evidence>
<evidence type="ECO:0000303" key="7">
    <source>
    </source>
</evidence>
<evidence type="ECO:0000303" key="8">
    <source>
    </source>
</evidence>
<evidence type="ECO:0000305" key="9"/>
<evidence type="ECO:0000305" key="10">
    <source>
    </source>
</evidence>
<evidence type="ECO:0000305" key="11">
    <source>
    </source>
</evidence>
<evidence type="ECO:0007744" key="12">
    <source>
        <dbReference type="PDB" id="1U6T"/>
    </source>
</evidence>
<evidence type="ECO:0007744" key="13">
    <source>
        <dbReference type="PDB" id="1WRY"/>
    </source>
</evidence>
<evidence type="ECO:0007829" key="14">
    <source>
        <dbReference type="PDB" id="1U6T"/>
    </source>
</evidence>
<proteinExistence type="evidence at protein level"/>
<feature type="chain" id="PRO_0000220745" description="Adapter SH3BGRL">
    <location>
        <begin position="1"/>
        <end position="114"/>
    </location>
</feature>
<feature type="region of interest" description="Required for interaction with HER2" evidence="3">
    <location>
        <begin position="13"/>
        <end position="50"/>
    </location>
</feature>
<feature type="region of interest" description="Required for interaction with PFN1, HER2, and ATG12" evidence="3 4 5">
    <location>
        <begin position="54"/>
        <end position="71"/>
    </location>
</feature>
<feature type="short sequence motif" description="SH3-binding" evidence="1">
    <location>
        <begin position="61"/>
        <end position="67"/>
    </location>
</feature>
<feature type="sequence conflict" description="In Ref. 2 and 3." evidence="9" ref="2 3">
    <original>E</original>
    <variation>K</variation>
    <location>
        <position position="35"/>
    </location>
</feature>
<feature type="sequence conflict" description="In Ref. 2 and 3." evidence="9" ref="2 3">
    <original>Q</original>
    <variation>R</variation>
    <location>
        <position position="113"/>
    </location>
</feature>
<feature type="strand" evidence="14">
    <location>
        <begin position="3"/>
        <end position="7"/>
    </location>
</feature>
<feature type="helix" evidence="14">
    <location>
        <begin position="14"/>
        <end position="29"/>
    </location>
</feature>
<feature type="strand" evidence="14">
    <location>
        <begin position="34"/>
        <end position="38"/>
    </location>
</feature>
<feature type="helix" evidence="14">
    <location>
        <begin position="43"/>
        <end position="52"/>
    </location>
</feature>
<feature type="helix" evidence="14">
    <location>
        <begin position="55"/>
        <end position="57"/>
    </location>
</feature>
<feature type="strand" evidence="14">
    <location>
        <begin position="60"/>
        <end position="63"/>
    </location>
</feature>
<feature type="strand" evidence="14">
    <location>
        <begin position="68"/>
        <end position="71"/>
    </location>
</feature>
<feature type="strand" evidence="14">
    <location>
        <begin position="74"/>
        <end position="78"/>
    </location>
</feature>
<feature type="helix" evidence="14">
    <location>
        <begin position="79"/>
        <end position="87"/>
    </location>
</feature>
<feature type="helix" evidence="14">
    <location>
        <begin position="91"/>
        <end position="95"/>
    </location>
</feature>
<feature type="helix" evidence="14">
    <location>
        <begin position="104"/>
        <end position="114"/>
    </location>
</feature>
<accession>O75368</accession>
<accession>Q3SYL1</accession>
<accession>Q5JT50</accession>
<accession>Q6FIE8</accession>
<accession>Q9H0N8</accession>
<keyword id="KW-0002">3D-structure</keyword>
<keyword id="KW-1003">Cell membrane</keyword>
<keyword id="KW-0963">Cytoplasm</keyword>
<keyword id="KW-0472">Membrane</keyword>
<keyword id="KW-1267">Proteomics identification</keyword>
<keyword id="KW-1185">Reference proteome</keyword>
<keyword id="KW-0729">SH3-binding</keyword>
<gene>
    <name evidence="8" type="primary">SH3BGRL</name>
</gene>
<comment type="function">
    <text evidence="4 5">Appears to function as an adapter protein that bridges proteins together or proteins with mRNAs (PubMed:34331014). May function as a ubiquitin ligase-substrate adapter (PubMed:34331014, PubMed:34870550). Additionally, associates with translating cytoplasmic ribosomes and may promote the expression of specific mRNAs (PubMed:34331014, PubMed:34870550).</text>
</comment>
<comment type="subunit">
    <text evidence="2 3 4 5">Monomer (PubMed:16511048). Interacts with PFN1/Profilin-1 (PubMed:34331014). Interacts with ERBB2 (PubMed:32381043). Interacts with ATG12 (PubMed:34870550). Interacts with BECN1 (PubMed:34870550). Interacts with translating ribosomes (PubMed:34331014, PubMed:34870550).</text>
</comment>
<comment type="subcellular location">
    <subcellularLocation>
        <location evidence="5 11">Cytoplasm</location>
        <location evidence="5 11">Cytosol</location>
    </subcellularLocation>
    <subcellularLocation>
        <location evidence="3">Cell membrane</location>
    </subcellularLocation>
</comment>
<comment type="tissue specificity">
    <text evidence="6">Ubiquitous.</text>
</comment>
<comment type="domain">
    <text evidence="10">The SH3-binding motif is buried in the tertiary structure, and it is therefore unclear whether it directly mediates protein-binding.</text>
</comment>
<comment type="disease">
    <text evidence="3 4 5">Promotes breast cancer progression by enhancing the interaction between E3 ligase STUB1 and PFN1, thereby promoting proteasomal degradation of PFN1 and subsequent activation of downstream signaling pathways including PI3K/AKT, NF-kB and WNT (PubMed:34331014). Promotes autophagy presumably by stabilizing the ubuiquitin-like protein ATG12 (PubMed:34870550). Enhances mRNA translation of E3 ligase STUB1 and the autophagy-related protein PIK3C3 (PubMed:34331014, PubMed:34870550). Promotes activation and phosphorylation of ERBB2 at 'Tyr-877' and 'Tyr-1196', and prolongs localization of ERBB2 to the cell membrane (PubMed:32381043). Breast cancer patients with SH3BGRL overexpression usually experience frequent relapse and poor prognosis (PubMed:32381043, PubMed:34870550).</text>
</comment>
<comment type="similarity">
    <text evidence="9">Belongs to the SH3BGR family.</text>
</comment>
<dbReference type="EMBL" id="AF042081">
    <property type="protein sequence ID" value="AAC27445.1"/>
    <property type="molecule type" value="mRNA"/>
</dbReference>
<dbReference type="EMBL" id="AL136718">
    <property type="protein sequence ID" value="CAB66652.1"/>
    <property type="molecule type" value="mRNA"/>
</dbReference>
<dbReference type="EMBL" id="CR533478">
    <property type="protein sequence ID" value="CAG38509.1"/>
    <property type="molecule type" value="mRNA"/>
</dbReference>
<dbReference type="EMBL" id="AL357115">
    <property type="status" value="NOT_ANNOTATED_CDS"/>
    <property type="molecule type" value="Genomic_DNA"/>
</dbReference>
<dbReference type="EMBL" id="BC016709">
    <property type="protein sequence ID" value="AAH16709.1"/>
    <property type="molecule type" value="mRNA"/>
</dbReference>
<dbReference type="EMBL" id="BC103762">
    <property type="protein sequence ID" value="AAI03763.1"/>
    <property type="molecule type" value="mRNA"/>
</dbReference>
<dbReference type="CCDS" id="CCDS14449.1"/>
<dbReference type="PIR" id="JE0178">
    <property type="entry name" value="JE0178"/>
</dbReference>
<dbReference type="RefSeq" id="NP_003013.1">
    <property type="nucleotide sequence ID" value="NM_003022.3"/>
</dbReference>
<dbReference type="PDB" id="1U6T">
    <property type="method" value="X-ray"/>
    <property type="resolution" value="1.90 A"/>
    <property type="chains" value="A=2-114"/>
</dbReference>
<dbReference type="PDB" id="1WRY">
    <property type="method" value="NMR"/>
    <property type="chains" value="A=1-108"/>
</dbReference>
<dbReference type="PDBsum" id="1U6T"/>
<dbReference type="PDBsum" id="1WRY"/>
<dbReference type="SMR" id="O75368"/>
<dbReference type="BioGRID" id="112349">
    <property type="interactions" value="151"/>
</dbReference>
<dbReference type="FunCoup" id="O75368">
    <property type="interactions" value="1446"/>
</dbReference>
<dbReference type="IntAct" id="O75368">
    <property type="interactions" value="102"/>
</dbReference>
<dbReference type="MINT" id="O75368"/>
<dbReference type="STRING" id="9606.ENSP00000362308"/>
<dbReference type="iPTMnet" id="O75368"/>
<dbReference type="PhosphoSitePlus" id="O75368"/>
<dbReference type="BioMuta" id="SH3BGRL"/>
<dbReference type="OGP" id="O75368"/>
<dbReference type="REPRODUCTION-2DPAGE" id="O75368"/>
<dbReference type="CPTAC" id="CPTAC-584"/>
<dbReference type="CPTAC" id="CPTAC-585"/>
<dbReference type="jPOST" id="O75368"/>
<dbReference type="MassIVE" id="O75368"/>
<dbReference type="PaxDb" id="9606-ENSP00000362308"/>
<dbReference type="PeptideAtlas" id="O75368"/>
<dbReference type="PRIDE" id="O75368"/>
<dbReference type="ProteomicsDB" id="49937"/>
<dbReference type="Pumba" id="O75368"/>
<dbReference type="TopDownProteomics" id="O75368"/>
<dbReference type="Antibodypedia" id="28352">
    <property type="antibodies" value="203 antibodies from 27 providers"/>
</dbReference>
<dbReference type="DNASU" id="6451"/>
<dbReference type="Ensembl" id="ENST00000373212.6">
    <property type="protein sequence ID" value="ENSP00000362308.5"/>
    <property type="gene ID" value="ENSG00000131171.13"/>
</dbReference>
<dbReference type="GeneID" id="6451"/>
<dbReference type="KEGG" id="hsa:6451"/>
<dbReference type="MANE-Select" id="ENST00000373212.6">
    <property type="protein sequence ID" value="ENSP00000362308.5"/>
    <property type="RefSeq nucleotide sequence ID" value="NM_003022.3"/>
    <property type="RefSeq protein sequence ID" value="NP_003013.1"/>
</dbReference>
<dbReference type="AGR" id="HGNC:10823"/>
<dbReference type="CTD" id="6451"/>
<dbReference type="DisGeNET" id="6451"/>
<dbReference type="GeneCards" id="SH3BGRL"/>
<dbReference type="HGNC" id="HGNC:10823">
    <property type="gene designation" value="SH3BGRL"/>
</dbReference>
<dbReference type="HPA" id="ENSG00000131171">
    <property type="expression patterns" value="Low tissue specificity"/>
</dbReference>
<dbReference type="MIM" id="300190">
    <property type="type" value="gene"/>
</dbReference>
<dbReference type="neXtProt" id="NX_O75368"/>
<dbReference type="OpenTargets" id="ENSG00000131171"/>
<dbReference type="PharmGKB" id="PA35731"/>
<dbReference type="VEuPathDB" id="HostDB:ENSG00000131171"/>
<dbReference type="eggNOG" id="KOG4023">
    <property type="taxonomic scope" value="Eukaryota"/>
</dbReference>
<dbReference type="GeneTree" id="ENSGT00940000156017"/>
<dbReference type="HOGENOM" id="CLU_084862_3_0_1"/>
<dbReference type="InParanoid" id="O75368"/>
<dbReference type="OMA" id="NEKEFMQ"/>
<dbReference type="OrthoDB" id="9932926at2759"/>
<dbReference type="PAN-GO" id="O75368">
    <property type="GO annotations" value="0 GO annotations based on evolutionary models"/>
</dbReference>
<dbReference type="PhylomeDB" id="O75368"/>
<dbReference type="TreeFam" id="TF105574"/>
<dbReference type="PathwayCommons" id="O75368"/>
<dbReference type="SignaLink" id="O75368"/>
<dbReference type="BioGRID-ORCS" id="6451">
    <property type="hits" value="23 hits in 777 CRISPR screens"/>
</dbReference>
<dbReference type="ChiTaRS" id="SH3BGRL">
    <property type="organism name" value="human"/>
</dbReference>
<dbReference type="EvolutionaryTrace" id="O75368"/>
<dbReference type="GeneWiki" id="SH3BGRL"/>
<dbReference type="GenomeRNAi" id="6451"/>
<dbReference type="Pharos" id="O75368">
    <property type="development level" value="Tbio"/>
</dbReference>
<dbReference type="PRO" id="PR:O75368"/>
<dbReference type="Proteomes" id="UP000005640">
    <property type="component" value="Chromosome X"/>
</dbReference>
<dbReference type="RNAct" id="O75368">
    <property type="molecule type" value="protein"/>
</dbReference>
<dbReference type="Bgee" id="ENSG00000131171">
    <property type="expression patterns" value="Expressed in seminal vesicle and 215 other cell types or tissues"/>
</dbReference>
<dbReference type="ExpressionAtlas" id="O75368">
    <property type="expression patterns" value="baseline and differential"/>
</dbReference>
<dbReference type="GO" id="GO:0005737">
    <property type="term" value="C:cytoplasm"/>
    <property type="evidence" value="ECO:0000318"/>
    <property type="project" value="GO_Central"/>
</dbReference>
<dbReference type="GO" id="GO:0005829">
    <property type="term" value="C:cytosol"/>
    <property type="evidence" value="ECO:0000314"/>
    <property type="project" value="UniProtKB"/>
</dbReference>
<dbReference type="GO" id="GO:0070062">
    <property type="term" value="C:extracellular exosome"/>
    <property type="evidence" value="ECO:0007005"/>
    <property type="project" value="UniProtKB"/>
</dbReference>
<dbReference type="GO" id="GO:0005615">
    <property type="term" value="C:extracellular space"/>
    <property type="evidence" value="ECO:0007005"/>
    <property type="project" value="UniProtKB"/>
</dbReference>
<dbReference type="GO" id="GO:0005634">
    <property type="term" value="C:nucleus"/>
    <property type="evidence" value="ECO:0000304"/>
    <property type="project" value="UniProtKB"/>
</dbReference>
<dbReference type="GO" id="GO:0005886">
    <property type="term" value="C:plasma membrane"/>
    <property type="evidence" value="ECO:0007669"/>
    <property type="project" value="UniProtKB-SubCell"/>
</dbReference>
<dbReference type="GO" id="GO:0140517">
    <property type="term" value="F:protein-RNA adaptor activity"/>
    <property type="evidence" value="ECO:0000315"/>
    <property type="project" value="UniProtKB"/>
</dbReference>
<dbReference type="GO" id="GO:0017124">
    <property type="term" value="F:SH3 domain binding"/>
    <property type="evidence" value="ECO:0007669"/>
    <property type="project" value="UniProtKB-KW"/>
</dbReference>
<dbReference type="GO" id="GO:1990756">
    <property type="term" value="F:ubiquitin-like ligase-substrate adaptor activity"/>
    <property type="evidence" value="ECO:0000315"/>
    <property type="project" value="UniProtKB"/>
</dbReference>
<dbReference type="GO" id="GO:1904690">
    <property type="term" value="P:positive regulation of cytoplasmic translational initiation"/>
    <property type="evidence" value="ECO:0000315"/>
    <property type="project" value="UniProtKB"/>
</dbReference>
<dbReference type="GO" id="GO:0043161">
    <property type="term" value="P:proteasome-mediated ubiquitin-dependent protein catabolic process"/>
    <property type="evidence" value="ECO:0000315"/>
    <property type="project" value="UniProtKB"/>
</dbReference>
<dbReference type="CDD" id="cd03030">
    <property type="entry name" value="GRX_SH3BGR"/>
    <property type="match status" value="1"/>
</dbReference>
<dbReference type="FunFam" id="3.40.30.10:FF:000065">
    <property type="entry name" value="SH3 domain-binding glutamic acid-rich-like protein"/>
    <property type="match status" value="1"/>
</dbReference>
<dbReference type="Gene3D" id="3.40.30.10">
    <property type="entry name" value="Glutaredoxin"/>
    <property type="match status" value="1"/>
</dbReference>
<dbReference type="InterPro" id="IPR006993">
    <property type="entry name" value="Glut_rich_SH3-bd"/>
</dbReference>
<dbReference type="InterPro" id="IPR051033">
    <property type="entry name" value="SH3BGR"/>
</dbReference>
<dbReference type="InterPro" id="IPR036249">
    <property type="entry name" value="Thioredoxin-like_sf"/>
</dbReference>
<dbReference type="PANTHER" id="PTHR12232:SF5">
    <property type="entry name" value="ADAPTER SH3BGRL"/>
    <property type="match status" value="1"/>
</dbReference>
<dbReference type="PANTHER" id="PTHR12232">
    <property type="entry name" value="SH3 DOMAIN-BINDING GLUTAMIC ACID-RICH-LIKE PROTEIN"/>
    <property type="match status" value="1"/>
</dbReference>
<dbReference type="Pfam" id="PF04908">
    <property type="entry name" value="SH3BGR"/>
    <property type="match status" value="1"/>
</dbReference>
<dbReference type="PIRSF" id="PIRSF008142">
    <property type="entry name" value="SH3-bind_E-rich_L"/>
    <property type="match status" value="1"/>
</dbReference>
<dbReference type="SUPFAM" id="SSF52833">
    <property type="entry name" value="Thioredoxin-like"/>
    <property type="match status" value="1"/>
</dbReference>
<name>SH3L1_HUMAN</name>
<sequence>MVIRVYIASSSGSTAIKKKQQDVLGFLEANKIGFEEKDIAANEENRKWMRENVPENSRPATGYPLPPQIFNESQYRGDYDAFFEARENNAVYAFLGLTAPPGSKEAEVQAKQQA</sequence>
<protein>
    <recommendedName>
        <fullName evidence="7">Adapter SH3BGRL</fullName>
    </recommendedName>
    <alternativeName>
        <fullName evidence="9">SH3 domain-binding glutamic acid-rich-like protein 1</fullName>
    </alternativeName>
</protein>
<organism>
    <name type="scientific">Homo sapiens</name>
    <name type="common">Human</name>
    <dbReference type="NCBI Taxonomy" id="9606"/>
    <lineage>
        <taxon>Eukaryota</taxon>
        <taxon>Metazoa</taxon>
        <taxon>Chordata</taxon>
        <taxon>Craniata</taxon>
        <taxon>Vertebrata</taxon>
        <taxon>Euteleostomi</taxon>
        <taxon>Mammalia</taxon>
        <taxon>Eutheria</taxon>
        <taxon>Euarchontoglires</taxon>
        <taxon>Primates</taxon>
        <taxon>Haplorrhini</taxon>
        <taxon>Catarrhini</taxon>
        <taxon>Hominidae</taxon>
        <taxon>Homo</taxon>
    </lineage>
</organism>